<dbReference type="EMBL" id="CP001099">
    <property type="protein sequence ID" value="ACF10577.1"/>
    <property type="molecule type" value="Genomic_DNA"/>
</dbReference>
<dbReference type="RefSeq" id="WP_012501412.1">
    <property type="nucleotide sequence ID" value="NC_011027.1"/>
</dbReference>
<dbReference type="SMR" id="B3QRD3"/>
<dbReference type="STRING" id="517417.Cpar_0150"/>
<dbReference type="KEGG" id="cpc:Cpar_0150"/>
<dbReference type="eggNOG" id="COG1381">
    <property type="taxonomic scope" value="Bacteria"/>
</dbReference>
<dbReference type="HOGENOM" id="CLU_066632_1_0_10"/>
<dbReference type="OrthoDB" id="9789152at2"/>
<dbReference type="Proteomes" id="UP000008811">
    <property type="component" value="Chromosome"/>
</dbReference>
<dbReference type="GO" id="GO:0043590">
    <property type="term" value="C:bacterial nucleoid"/>
    <property type="evidence" value="ECO:0007669"/>
    <property type="project" value="TreeGrafter"/>
</dbReference>
<dbReference type="GO" id="GO:0006310">
    <property type="term" value="P:DNA recombination"/>
    <property type="evidence" value="ECO:0007669"/>
    <property type="project" value="UniProtKB-UniRule"/>
</dbReference>
<dbReference type="GO" id="GO:0006302">
    <property type="term" value="P:double-strand break repair"/>
    <property type="evidence" value="ECO:0007669"/>
    <property type="project" value="TreeGrafter"/>
</dbReference>
<dbReference type="Gene3D" id="2.40.50.140">
    <property type="entry name" value="Nucleic acid-binding proteins"/>
    <property type="match status" value="1"/>
</dbReference>
<dbReference type="Gene3D" id="1.20.1440.120">
    <property type="entry name" value="Recombination protein O, C-terminal domain"/>
    <property type="match status" value="1"/>
</dbReference>
<dbReference type="HAMAP" id="MF_00201">
    <property type="entry name" value="RecO"/>
    <property type="match status" value="1"/>
</dbReference>
<dbReference type="InterPro" id="IPR037278">
    <property type="entry name" value="ARFGAP/RecO"/>
</dbReference>
<dbReference type="InterPro" id="IPR022572">
    <property type="entry name" value="DNA_rep/recomb_RecO_N"/>
</dbReference>
<dbReference type="InterPro" id="IPR012340">
    <property type="entry name" value="NA-bd_OB-fold"/>
</dbReference>
<dbReference type="InterPro" id="IPR003717">
    <property type="entry name" value="RecO"/>
</dbReference>
<dbReference type="InterPro" id="IPR042242">
    <property type="entry name" value="RecO_C"/>
</dbReference>
<dbReference type="NCBIfam" id="TIGR00613">
    <property type="entry name" value="reco"/>
    <property type="match status" value="1"/>
</dbReference>
<dbReference type="PANTHER" id="PTHR33991">
    <property type="entry name" value="DNA REPAIR PROTEIN RECO"/>
    <property type="match status" value="1"/>
</dbReference>
<dbReference type="PANTHER" id="PTHR33991:SF1">
    <property type="entry name" value="DNA REPAIR PROTEIN RECO"/>
    <property type="match status" value="1"/>
</dbReference>
<dbReference type="Pfam" id="PF02565">
    <property type="entry name" value="RecO_C"/>
    <property type="match status" value="1"/>
</dbReference>
<dbReference type="Pfam" id="PF11967">
    <property type="entry name" value="RecO_N"/>
    <property type="match status" value="1"/>
</dbReference>
<dbReference type="SUPFAM" id="SSF57863">
    <property type="entry name" value="ArfGap/RecO-like zinc finger"/>
    <property type="match status" value="1"/>
</dbReference>
<dbReference type="SUPFAM" id="SSF50249">
    <property type="entry name" value="Nucleic acid-binding proteins"/>
    <property type="match status" value="1"/>
</dbReference>
<feature type="chain" id="PRO_1000099369" description="DNA repair protein RecO">
    <location>
        <begin position="1"/>
        <end position="260"/>
    </location>
</feature>
<protein>
    <recommendedName>
        <fullName evidence="1">DNA repair protein RecO</fullName>
    </recommendedName>
    <alternativeName>
        <fullName evidence="1">Recombination protein O</fullName>
    </alternativeName>
</protein>
<comment type="function">
    <text evidence="1">Involved in DNA repair and RecF pathway recombination.</text>
</comment>
<comment type="similarity">
    <text evidence="1">Belongs to the RecO family.</text>
</comment>
<reference key="1">
    <citation type="submission" date="2008-06" db="EMBL/GenBank/DDBJ databases">
        <title>Complete sequence of Chlorobaculum parvum NCIB 8327.</title>
        <authorList>
            <consortium name="US DOE Joint Genome Institute"/>
            <person name="Lucas S."/>
            <person name="Copeland A."/>
            <person name="Lapidus A."/>
            <person name="Glavina del Rio T."/>
            <person name="Dalin E."/>
            <person name="Tice H."/>
            <person name="Bruce D."/>
            <person name="Goodwin L."/>
            <person name="Pitluck S."/>
            <person name="Schmutz J."/>
            <person name="Larimer F."/>
            <person name="Land M."/>
            <person name="Hauser L."/>
            <person name="Kyrpides N."/>
            <person name="Mikhailova N."/>
            <person name="Zhao F."/>
            <person name="Li T."/>
            <person name="Liu Z."/>
            <person name="Overmann J."/>
            <person name="Bryant D.A."/>
            <person name="Richardson P."/>
        </authorList>
    </citation>
    <scope>NUCLEOTIDE SEQUENCE [LARGE SCALE GENOMIC DNA]</scope>
    <source>
        <strain>DSM 263 / NCIMB 8327</strain>
    </source>
</reference>
<sequence>MIVKTRAVVLRDIKYRDQSKICLLLTREYGQVSVILKGGRSAKSKTGMLFSPGNLIDAVLYKKGNRDLQLASDASLVKSPLSETPDLERFSVLYRVLDLVRYASGPEEKNVPLFTLVAATIERLCDTERDFQPILAGFLLRLVSVLGFTPALKRCVFSNYDLLGSIEEMQLDELLFVHDPGGFALPGSAVPMGATIQRVPVSHYLFIRALAATGSQAACPEASPEEVSAVTALLQEYCACHLGRMPHRKHLDIVSRLISA</sequence>
<proteinExistence type="inferred from homology"/>
<gene>
    <name evidence="1" type="primary">recO</name>
    <name type="ordered locus">Cpar_0150</name>
</gene>
<organism>
    <name type="scientific">Chlorobaculum parvum (strain DSM 263 / NCIMB 8327)</name>
    <name type="common">Chlorobium vibrioforme subsp. thiosulfatophilum</name>
    <dbReference type="NCBI Taxonomy" id="517417"/>
    <lineage>
        <taxon>Bacteria</taxon>
        <taxon>Pseudomonadati</taxon>
        <taxon>Chlorobiota</taxon>
        <taxon>Chlorobiia</taxon>
        <taxon>Chlorobiales</taxon>
        <taxon>Chlorobiaceae</taxon>
        <taxon>Chlorobaculum</taxon>
    </lineage>
</organism>
<name>RECO_CHLP8</name>
<evidence type="ECO:0000255" key="1">
    <source>
        <dbReference type="HAMAP-Rule" id="MF_00201"/>
    </source>
</evidence>
<keyword id="KW-0227">DNA damage</keyword>
<keyword id="KW-0233">DNA recombination</keyword>
<keyword id="KW-0234">DNA repair</keyword>
<accession>B3QRD3</accession>